<proteinExistence type="evidence at protein level"/>
<sequence length="266" mass="28520">MATVESGPDALVERRGHTLIVTMNRPAARNALSTEMMRIMVQAWDRVDNDPDIRCCILTGAGGYFCAGMDLKAATQKPPGDSFKDGSYGPSRIDALLKGRRLTKPLIAAVEGPAIAGGTEILQGTDIRVAGESAKFGISEAKWSLYPMGGSAVRLVRQIPYTLACDLLLTGRHITAAEAKEMGLIGHVVPDGQALTKALELADAISANGPLAVQAILRSIRETECMPENEAFKIDTQIGIKVFLSDDAKEGPRAFAEKRAPNFQNR</sequence>
<keyword id="KW-0002">3D-structure</keyword>
<keyword id="KW-0153">Cholesterol metabolism</keyword>
<keyword id="KW-0903">Direct protein sequencing</keyword>
<keyword id="KW-0442">Lipid degradation</keyword>
<keyword id="KW-0443">Lipid metabolism</keyword>
<keyword id="KW-0456">Lyase</keyword>
<keyword id="KW-1185">Reference proteome</keyword>
<keyword id="KW-0753">Steroid metabolism</keyword>
<keyword id="KW-1207">Sterol metabolism</keyword>
<gene>
    <name evidence="8" type="primary">echA19</name>
    <name evidence="12" type="ordered locus">Rv3516</name>
</gene>
<comment type="function">
    <text evidence="4 5 10 11">Degradation of the cholesterol side chain involves 3 multistep beta-oxidation cycles, this may be involved in the second cycle (Probable). Hydrates 3-OCDO-CoA ((22E)-3-oxo-chol-4,22-dien-24-oyl-CoA) to make (22R)-HOCO-CoA (3-oxo-chol-4-ene-(22R)-hydroxy-24-oyl-CoA). Also acts on octenoyl-CoA. Not active on (E)-3-OCDS-CoA ((E)-3-oxocholest-4,24-dien-26-oyl-CoA) or 3-OPDC-CoA (3-oxo-4,17-pregnadiene-20-carboxyl-CoA). Hydrates the same substrate as ChsH3, but the 2 enzymes make different stereoisomers of the product (PubMed:32649175, PubMed:33826843).</text>
</comment>
<comment type="catalytic activity">
    <reaction evidence="5">
        <text>(22E)-3-oxochola-4,22-dien-24-oyl-CoA + H2O = (22R)-hydroxy-3-oxo-chol-4-ene-24-oyl-CoA</text>
        <dbReference type="Rhea" id="RHEA:72575"/>
        <dbReference type="ChEBI" id="CHEBI:15377"/>
        <dbReference type="ChEBI" id="CHEBI:136759"/>
        <dbReference type="ChEBI" id="CHEBI:192383"/>
    </reaction>
</comment>
<comment type="biophysicochemical properties">
    <kinetics>
        <KM evidence="4">3.4 uM for octenoyl-CoA</KM>
        <KM evidence="4">5.8 uM for 3-OCDO-CoA</KM>
        <KM evidence="4">8 uM for 3-OCDO-CoA with succinylated enzyme</KM>
        <text evidence="4">kcat is 181.2 sec(-1) with 3-OCDO-CoA as substrate. kcat is 45.7 sec(-1) with 3-OCDO-CoA as substrate with succinylated EchA19. kcat is 1.2 sec(-1) with octenoyl-CoA as substrate.</text>
    </kinetics>
</comment>
<comment type="pathway">
    <text evidence="4">Steroid metabolism; cholesterol degradation.</text>
</comment>
<comment type="subunit">
    <text evidence="4">Homotrimer; substrate probably binds in elongated tunnels between the subunits.</text>
</comment>
<comment type="PTM">
    <text evidence="4">Succinylated in vitro at pH 8.1, succinylation reduces specific activity of the enzyme 5.5-fold; succinyl-CoA is a downstream by-product of cholesterol degradation. Can be de-succinylated in vitro by NAD-dependent protein deacylase (AC P9WGG3). Succinylation may be a negative feedback regulator of cholesterol metabolism.</text>
</comment>
<comment type="disruption phenotype">
    <text evidence="1 2">Not required for growth in a mouse tuberculosis model (PubMed:14569030). Not required for growth on cholesterol (PubMed:21980284).</text>
</comment>
<comment type="similarity">
    <text evidence="9">Belongs to the enoyl-CoA hydratase/isomerase family.</text>
</comment>
<comment type="sequence caution" evidence="6">
    <conflict type="erroneous initiation">
        <sequence resource="EMBL-CDS" id="CCP46338"/>
    </conflict>
    <text>Truncated N-terminus.</text>
</comment>
<organism>
    <name type="scientific">Mycobacterium tuberculosis (strain ATCC 25618 / H37Rv)</name>
    <dbReference type="NCBI Taxonomy" id="83332"/>
    <lineage>
        <taxon>Bacteria</taxon>
        <taxon>Bacillati</taxon>
        <taxon>Actinomycetota</taxon>
        <taxon>Actinomycetes</taxon>
        <taxon>Mycobacteriales</taxon>
        <taxon>Mycobacteriaceae</taxon>
        <taxon>Mycobacterium</taxon>
        <taxon>Mycobacterium tuberculosis complex</taxon>
    </lineage>
</organism>
<accession>O53561</accession>
<accession>I6Y3R1</accession>
<dbReference type="EC" id="4.2.1.-" evidence="5"/>
<dbReference type="EMBL" id="AL123456">
    <property type="protein sequence ID" value="CCP46338.1"/>
    <property type="status" value="ALT_INIT"/>
    <property type="molecule type" value="Genomic_DNA"/>
</dbReference>
<dbReference type="RefSeq" id="NP_218033.1">
    <property type="nucleotide sequence ID" value="NC_000962.3"/>
</dbReference>
<dbReference type="PDB" id="6WYI">
    <property type="method" value="X-ray"/>
    <property type="resolution" value="1.92 A"/>
    <property type="chains" value="A=5-266"/>
</dbReference>
<dbReference type="PDBsum" id="6WYI"/>
<dbReference type="SMR" id="O53561"/>
<dbReference type="FunCoup" id="O53561">
    <property type="interactions" value="82"/>
</dbReference>
<dbReference type="STRING" id="83332.Rv3516"/>
<dbReference type="PaxDb" id="83332-Rv3516"/>
<dbReference type="DNASU" id="888301"/>
<dbReference type="GeneID" id="888301"/>
<dbReference type="KEGG" id="mtu:Rv3516"/>
<dbReference type="PATRIC" id="fig|83332.111.peg.3917"/>
<dbReference type="TubercuList" id="Rv3516"/>
<dbReference type="eggNOG" id="COG1024">
    <property type="taxonomic scope" value="Bacteria"/>
</dbReference>
<dbReference type="InParanoid" id="O53561"/>
<dbReference type="OrthoDB" id="4284283at2"/>
<dbReference type="PhylomeDB" id="O53561"/>
<dbReference type="BioCyc" id="MetaCyc:G185E-7793-MONOMER"/>
<dbReference type="UniPathway" id="UPA01058"/>
<dbReference type="Proteomes" id="UP000001584">
    <property type="component" value="Chromosome"/>
</dbReference>
<dbReference type="GO" id="GO:0016829">
    <property type="term" value="F:lyase activity"/>
    <property type="evidence" value="ECO:0007669"/>
    <property type="project" value="UniProtKB-KW"/>
</dbReference>
<dbReference type="GO" id="GO:0006707">
    <property type="term" value="P:cholesterol catabolic process"/>
    <property type="evidence" value="ECO:0007669"/>
    <property type="project" value="UniProtKB-UniPathway"/>
</dbReference>
<dbReference type="GO" id="GO:0006635">
    <property type="term" value="P:fatty acid beta-oxidation"/>
    <property type="evidence" value="ECO:0000318"/>
    <property type="project" value="GO_Central"/>
</dbReference>
<dbReference type="CDD" id="cd06558">
    <property type="entry name" value="crotonase-like"/>
    <property type="match status" value="1"/>
</dbReference>
<dbReference type="FunFam" id="3.90.226.10:FF:000042">
    <property type="entry name" value="Enoyl-CoA hydratase EchA1"/>
    <property type="match status" value="1"/>
</dbReference>
<dbReference type="FunFam" id="1.10.12.10:FF:000025">
    <property type="entry name" value="Enoyl-CoA hydratase EchA19"/>
    <property type="match status" value="1"/>
</dbReference>
<dbReference type="Gene3D" id="3.90.226.10">
    <property type="entry name" value="2-enoyl-CoA Hydratase, Chain A, domain 1"/>
    <property type="match status" value="1"/>
</dbReference>
<dbReference type="Gene3D" id="1.10.12.10">
    <property type="entry name" value="Lyase 2-enoyl-coa Hydratase, Chain A, domain 2"/>
    <property type="match status" value="1"/>
</dbReference>
<dbReference type="InterPro" id="IPR029045">
    <property type="entry name" value="ClpP/crotonase-like_dom_sf"/>
</dbReference>
<dbReference type="InterPro" id="IPR001753">
    <property type="entry name" value="Enoyl-CoA_hydra/iso"/>
</dbReference>
<dbReference type="InterPro" id="IPR014748">
    <property type="entry name" value="Enoyl-CoA_hydra_C"/>
</dbReference>
<dbReference type="NCBIfam" id="NF005864">
    <property type="entry name" value="PRK07799.1"/>
    <property type="match status" value="1"/>
</dbReference>
<dbReference type="PANTHER" id="PTHR11941:SF169">
    <property type="entry name" value="(7AS)-7A-METHYL-1,5-DIOXO-2,3,5,6,7,7A-HEXAHYDRO-1H-INDENE-CARBOXYL-COA HYDROLASE"/>
    <property type="match status" value="1"/>
</dbReference>
<dbReference type="PANTHER" id="PTHR11941">
    <property type="entry name" value="ENOYL-COA HYDRATASE-RELATED"/>
    <property type="match status" value="1"/>
</dbReference>
<dbReference type="Pfam" id="PF00378">
    <property type="entry name" value="ECH_1"/>
    <property type="match status" value="1"/>
</dbReference>
<dbReference type="SUPFAM" id="SSF52096">
    <property type="entry name" value="ClpP/crotonase"/>
    <property type="match status" value="1"/>
</dbReference>
<name>ECH19_MYCTU</name>
<protein>
    <recommendedName>
        <fullName evidence="7">Enoyl-CoA hydratase EchA19</fullName>
        <ecNumber evidence="5">4.2.1.-</ecNumber>
    </recommendedName>
</protein>
<feature type="chain" id="PRO_0000456533" description="Enoyl-CoA hydratase EchA19">
    <location>
        <begin position="1"/>
        <end position="266"/>
    </location>
</feature>
<feature type="active site" evidence="10">
    <location>
        <position position="120"/>
    </location>
</feature>
<feature type="active site" evidence="10">
    <location>
        <position position="140"/>
    </location>
</feature>
<feature type="modified residue" description="N6-succinyllysine" evidence="3">
    <location>
        <position position="135"/>
    </location>
</feature>
<feature type="modified residue" description="N6-succinyllysine" evidence="3">
    <location>
        <position position="142"/>
    </location>
</feature>
<feature type="mutagenesis site" description="Very low levels of succinylation in vitro, reduces specific activity 15-fold." evidence="4">
    <original>KFGISEAK</original>
    <variation>EFGISEAE</variation>
    <location>
        <begin position="135"/>
        <end position="142"/>
    </location>
</feature>
<feature type="mutagenesis site" description="Nearly wild-type levels of succinylation in vitro, reduces specific activity 8-fold." evidence="4">
    <original>K</original>
    <variation>E</variation>
    <location>
        <position position="135"/>
    </location>
</feature>
<feature type="mutagenesis site" description="About 50% succinylation in vitro, reduces specific activity 7-fold." evidence="4">
    <original>K</original>
    <variation>E</variation>
    <location>
        <position position="142"/>
    </location>
</feature>
<feature type="strand" evidence="15">
    <location>
        <begin position="9"/>
        <end position="15"/>
    </location>
</feature>
<feature type="strand" evidence="15">
    <location>
        <begin position="18"/>
        <end position="23"/>
    </location>
</feature>
<feature type="helix" evidence="15">
    <location>
        <begin position="26"/>
        <end position="28"/>
    </location>
</feature>
<feature type="helix" evidence="15">
    <location>
        <begin position="34"/>
        <end position="49"/>
    </location>
</feature>
<feature type="strand" evidence="15">
    <location>
        <begin position="55"/>
        <end position="61"/>
    </location>
</feature>
<feature type="strand" evidence="15">
    <location>
        <begin position="106"/>
        <end position="110"/>
    </location>
</feature>
<feature type="strand" evidence="15">
    <location>
        <begin position="112"/>
        <end position="115"/>
    </location>
</feature>
<feature type="helix" evidence="15">
    <location>
        <begin position="117"/>
        <end position="122"/>
    </location>
</feature>
<feature type="strand" evidence="15">
    <location>
        <begin position="126"/>
        <end position="131"/>
    </location>
</feature>
<feature type="strand" evidence="15">
    <location>
        <begin position="135"/>
        <end position="137"/>
    </location>
</feature>
<feature type="helix" evidence="15">
    <location>
        <begin position="140"/>
        <end position="143"/>
    </location>
</feature>
<feature type="turn" evidence="15">
    <location>
        <begin position="148"/>
        <end position="150"/>
    </location>
</feature>
<feature type="helix" evidence="15">
    <location>
        <begin position="151"/>
        <end position="158"/>
    </location>
</feature>
<feature type="helix" evidence="15">
    <location>
        <begin position="161"/>
        <end position="170"/>
    </location>
</feature>
<feature type="helix" evidence="15">
    <location>
        <begin position="176"/>
        <end position="181"/>
    </location>
</feature>
<feature type="strand" evidence="15">
    <location>
        <begin position="186"/>
        <end position="189"/>
    </location>
</feature>
<feature type="helix" evidence="15">
    <location>
        <begin position="194"/>
        <end position="207"/>
    </location>
</feature>
<feature type="helix" evidence="15">
    <location>
        <begin position="210"/>
        <end position="222"/>
    </location>
</feature>
<feature type="turn" evidence="15">
    <location>
        <begin position="223"/>
        <end position="225"/>
    </location>
</feature>
<feature type="helix" evidence="15">
    <location>
        <begin position="228"/>
        <end position="243"/>
    </location>
</feature>
<feature type="helix" evidence="15">
    <location>
        <begin position="247"/>
        <end position="256"/>
    </location>
</feature>
<evidence type="ECO:0000269" key="1">
    <source>
    </source>
</evidence>
<evidence type="ECO:0000269" key="2">
    <source>
    </source>
</evidence>
<evidence type="ECO:0000269" key="3">
    <source>
    </source>
</evidence>
<evidence type="ECO:0000269" key="4">
    <source>
    </source>
</evidence>
<evidence type="ECO:0000269" key="5">
    <source>
    </source>
</evidence>
<evidence type="ECO:0000269" key="6">
    <source>
    </source>
</evidence>
<evidence type="ECO:0000303" key="7">
    <source>
    </source>
</evidence>
<evidence type="ECO:0000303" key="8">
    <source>
    </source>
</evidence>
<evidence type="ECO:0000305" key="9"/>
<evidence type="ECO:0000305" key="10">
    <source>
    </source>
</evidence>
<evidence type="ECO:0000305" key="11">
    <source>
    </source>
</evidence>
<evidence type="ECO:0000312" key="12">
    <source>
        <dbReference type="EMBL" id="CCP46338.1"/>
    </source>
</evidence>
<evidence type="ECO:0007744" key="13">
    <source>
        <dbReference type="PDB" id="6WYI"/>
    </source>
</evidence>
<evidence type="ECO:0007744" key="14">
    <source>
    </source>
</evidence>
<evidence type="ECO:0007829" key="15">
    <source>
        <dbReference type="PDB" id="6WYI"/>
    </source>
</evidence>
<reference evidence="12" key="1">
    <citation type="journal article" date="1998" name="Nature">
        <title>Deciphering the biology of Mycobacterium tuberculosis from the complete genome sequence.</title>
        <authorList>
            <person name="Cole S.T."/>
            <person name="Brosch R."/>
            <person name="Parkhill J."/>
            <person name="Garnier T."/>
            <person name="Churcher C.M."/>
            <person name="Harris D.E."/>
            <person name="Gordon S.V."/>
            <person name="Eiglmeier K."/>
            <person name="Gas S."/>
            <person name="Barry C.E. III"/>
            <person name="Tekaia F."/>
            <person name="Badcock K."/>
            <person name="Basham D."/>
            <person name="Brown D."/>
            <person name="Chillingworth T."/>
            <person name="Connor R."/>
            <person name="Davies R.M."/>
            <person name="Devlin K."/>
            <person name="Feltwell T."/>
            <person name="Gentles S."/>
            <person name="Hamlin N."/>
            <person name="Holroyd S."/>
            <person name="Hornsby T."/>
            <person name="Jagels K."/>
            <person name="Krogh A."/>
            <person name="McLean J."/>
            <person name="Moule S."/>
            <person name="Murphy L.D."/>
            <person name="Oliver S."/>
            <person name="Osborne J."/>
            <person name="Quail M.A."/>
            <person name="Rajandream M.A."/>
            <person name="Rogers J."/>
            <person name="Rutter S."/>
            <person name="Seeger K."/>
            <person name="Skelton S."/>
            <person name="Squares S."/>
            <person name="Squares R."/>
            <person name="Sulston J.E."/>
            <person name="Taylor K."/>
            <person name="Whitehead S."/>
            <person name="Barrell B.G."/>
        </authorList>
    </citation>
    <scope>NUCLEOTIDE SEQUENCE [LARGE SCALE GENOMIC DNA]</scope>
    <source>
        <strain>ATCC 25618 / H37Rv</strain>
    </source>
</reference>
<reference key="2">
    <citation type="journal article" date="2022" name="Genomics">
        <title>Deep N-terminomics of Mycobacterium tuberculosis H37Rv extensively correct annotated encoding genes.</title>
        <authorList>
            <person name="Shi J."/>
            <person name="Meng S."/>
            <person name="Wan L."/>
            <person name="Zhang Z."/>
            <person name="Jiang S."/>
            <person name="Zhu H."/>
            <person name="Dai E."/>
            <person name="Chang L."/>
            <person name="Gao H."/>
            <person name="Wan K."/>
            <person name="Zhang L."/>
            <person name="Zhao X."/>
            <person name="Liu H."/>
            <person name="Lyu Z."/>
            <person name="Zhang Y."/>
            <person name="Xu P."/>
        </authorList>
    </citation>
    <scope>PROTEIN SEQUENCE OF 2-14</scope>
    <scope>SEQUENCE REVISION TO N-TERMINUS</scope>
    <source>
        <strain>H37Rv</strain>
    </source>
</reference>
<reference key="3">
    <citation type="journal article" date="2003" name="Proc. Natl. Acad. Sci. U.S.A.">
        <title>Genetic requirements for mycobacterial survival during infection.</title>
        <authorList>
            <person name="Sassetti C.M."/>
            <person name="Rubin E.J."/>
        </authorList>
    </citation>
    <scope>DISRUPTION PHENOTYPE</scope>
    <source>
        <strain>ATCC 25618 / H37Rv</strain>
    </source>
</reference>
<reference evidence="14" key="4">
    <citation type="journal article" date="2011" name="Mol. Cell. Proteomics">
        <title>Proteogenomic analysis of Mycobacterium tuberculosis by high resolution mass spectrometry.</title>
        <authorList>
            <person name="Kelkar D.S."/>
            <person name="Kumar D."/>
            <person name="Kumar P."/>
            <person name="Balakrishnan L."/>
            <person name="Muthusamy B."/>
            <person name="Yadav A.K."/>
            <person name="Shrivastava P."/>
            <person name="Marimuthu A."/>
            <person name="Anand S."/>
            <person name="Sundaram H."/>
            <person name="Kingsbury R."/>
            <person name="Harsha H.C."/>
            <person name="Nair B."/>
            <person name="Prasad T.S."/>
            <person name="Chauhan D.S."/>
            <person name="Katoch K."/>
            <person name="Katoch V.M."/>
            <person name="Kumar P."/>
            <person name="Chaerkady R."/>
            <person name="Ramachandran S."/>
            <person name="Dash D."/>
            <person name="Pandey A."/>
        </authorList>
    </citation>
    <scope>IDENTIFICATION BY MASS SPECTROMETRY [LARGE SCALE ANALYSIS]</scope>
    <source>
        <strain>ATCC 25618 / H37Rv</strain>
    </source>
</reference>
<reference key="5">
    <citation type="journal article" date="2011" name="PLoS Pathog.">
        <title>High-resolution phenotypic profiling defines genes essential for mycobacterial growth and cholesterol catabolism.</title>
        <authorList>
            <person name="Griffin J.E."/>
            <person name="Gawronski J.D."/>
            <person name="Dejesus M.A."/>
            <person name="Ioerger T.R."/>
            <person name="Akerley B.J."/>
            <person name="Sassetti C.M."/>
        </authorList>
    </citation>
    <scope>DISRUPTION PHENOTYPE</scope>
    <source>
        <strain>ATCC 25618 / H37Rv</strain>
    </source>
</reference>
<reference key="6">
    <citation type="journal article" date="2015" name="Mol. Cell. Proteomics">
        <title>Succinylome analysis reveals the involvement of lysine succinylation in metabolism in pathogenic Mycobacterium tuberculosis.</title>
        <authorList>
            <person name="Yang M."/>
            <person name="Wang Y."/>
            <person name="Chen Y."/>
            <person name="Cheng Z."/>
            <person name="Gu J."/>
            <person name="Deng J."/>
            <person name="Bi L."/>
            <person name="Chen C."/>
            <person name="Mo R."/>
            <person name="Wang X."/>
            <person name="Ge F."/>
        </authorList>
    </citation>
    <scope>SUCCINYLATION [LARGE SCALE ANALYSIS] AT LYS-135 AND AT LYS-142</scope>
    <source>
        <strain>ATCC 27294 / TMC 102 / H37Rv</strain>
    </source>
</reference>
<reference key="7">
    <citation type="journal article" date="2021" name="ACS Infect. Dis.">
        <title>Enzymatic beta-Oxidation of the Cholesterol Side Chain in Mycobacterium tuberculosis Bifurcates Stereospecifically at Hydration of 3-Oxo-cholest-4,22-dien-24-oyl-CoA.</title>
        <authorList>
            <person name="Yuan T."/>
            <person name="Werman J.M."/>
            <person name="Yin X."/>
            <person name="Yang M."/>
            <person name="Garcia-Diaz M."/>
            <person name="Sampson N.S."/>
        </authorList>
    </citation>
    <scope>FUNCTION</scope>
    <scope>CATALYTIC ACTIVITY</scope>
    <scope>STEREOSPECIFIC PRODUCT</scope>
    <source>
        <strain>H37Rv</strain>
    </source>
</reference>
<reference evidence="13" key="8">
    <citation type="journal article" date="2020" name="ACS Infect. Dis.">
        <title>Post-translational Succinylation of Mycobacterium tuberculosis Enoyl-CoA Hydratase EchA19 Slows Catalytic Hydration of Cholesterol Catabolite 3-Oxo-chol-4,22-diene-24-oyl-CoA.</title>
        <authorList>
            <person name="Bonds A.C."/>
            <person name="Yuan T."/>
            <person name="Werman J.M."/>
            <person name="Jang J."/>
            <person name="Lu R."/>
            <person name="Nesbitt N.M."/>
            <person name="Garcia-Diaz M."/>
            <person name="Sampson N.S."/>
        </authorList>
    </citation>
    <scope>X-RAY CRYSTALLOGRAPHY (1.92 ANGSTROMS) OF 5-266</scope>
    <scope>FUNCTION</scope>
    <scope>CATALYTIC ACTIVITY</scope>
    <scope>PROBABLE ACTIVE SITES</scope>
    <scope>BIOPHYSICOCHEMICAL PROPERTIES</scope>
    <scope>PATHWAY</scope>
    <scope>SUBUNIT</scope>
    <scope>MUTAGENESIS OF 135-LYS--LYS-142; LYS-135 AND LYS-142</scope>
    <source>
        <strain>ATCC 25618 / H37Rv</strain>
    </source>
</reference>